<comment type="function">
    <text evidence="1">Part of the ABC transporter complex TauABC involved in taurine import. Responsible for energy coupling to the transport system.</text>
</comment>
<comment type="catalytic activity">
    <reaction evidence="1">
        <text>taurine(out) + ATP + H2O = taurine(in) + ADP + phosphate + H(+)</text>
        <dbReference type="Rhea" id="RHEA:14613"/>
        <dbReference type="ChEBI" id="CHEBI:15377"/>
        <dbReference type="ChEBI" id="CHEBI:15378"/>
        <dbReference type="ChEBI" id="CHEBI:30616"/>
        <dbReference type="ChEBI" id="CHEBI:43474"/>
        <dbReference type="ChEBI" id="CHEBI:456216"/>
        <dbReference type="ChEBI" id="CHEBI:507393"/>
        <dbReference type="EC" id="7.6.2.7"/>
    </reaction>
</comment>
<comment type="subunit">
    <text evidence="1">The complex is composed of two ATP-binding proteins (TauB), two transmembrane proteins (TauC) and a solute-binding protein (TauA).</text>
</comment>
<comment type="subcellular location">
    <subcellularLocation>
        <location evidence="1">Cell inner membrane</location>
        <topology evidence="1">Peripheral membrane protein</topology>
    </subcellularLocation>
</comment>
<comment type="similarity">
    <text evidence="1">Belongs to the ABC transporter superfamily. Taurine importer (TC 3.A.1.17.1) family.</text>
</comment>
<gene>
    <name evidence="1" type="primary">tauB</name>
    <name type="ordered locus">SF0252</name>
    <name type="ordered locus">S0273</name>
</gene>
<evidence type="ECO:0000255" key="1">
    <source>
        <dbReference type="HAMAP-Rule" id="MF_01714"/>
    </source>
</evidence>
<keyword id="KW-0067">ATP-binding</keyword>
<keyword id="KW-0997">Cell inner membrane</keyword>
<keyword id="KW-1003">Cell membrane</keyword>
<keyword id="KW-0472">Membrane</keyword>
<keyword id="KW-0547">Nucleotide-binding</keyword>
<keyword id="KW-1185">Reference proteome</keyword>
<keyword id="KW-1278">Translocase</keyword>
<keyword id="KW-0813">Transport</keyword>
<reference key="1">
    <citation type="journal article" date="2002" name="Nucleic Acids Res.">
        <title>Genome sequence of Shigella flexneri 2a: insights into pathogenicity through comparison with genomes of Escherichia coli K12 and O157.</title>
        <authorList>
            <person name="Jin Q."/>
            <person name="Yuan Z."/>
            <person name="Xu J."/>
            <person name="Wang Y."/>
            <person name="Shen Y."/>
            <person name="Lu W."/>
            <person name="Wang J."/>
            <person name="Liu H."/>
            <person name="Yang J."/>
            <person name="Yang F."/>
            <person name="Zhang X."/>
            <person name="Zhang J."/>
            <person name="Yang G."/>
            <person name="Wu H."/>
            <person name="Qu D."/>
            <person name="Dong J."/>
            <person name="Sun L."/>
            <person name="Xue Y."/>
            <person name="Zhao A."/>
            <person name="Gao Y."/>
            <person name="Zhu J."/>
            <person name="Kan B."/>
            <person name="Ding K."/>
            <person name="Chen S."/>
            <person name="Cheng H."/>
            <person name="Yao Z."/>
            <person name="He B."/>
            <person name="Chen R."/>
            <person name="Ma D."/>
            <person name="Qiang B."/>
            <person name="Wen Y."/>
            <person name="Hou Y."/>
            <person name="Yu J."/>
        </authorList>
    </citation>
    <scope>NUCLEOTIDE SEQUENCE [LARGE SCALE GENOMIC DNA]</scope>
    <source>
        <strain>301 / Serotype 2a</strain>
    </source>
</reference>
<reference key="2">
    <citation type="journal article" date="2003" name="Infect. Immun.">
        <title>Complete genome sequence and comparative genomics of Shigella flexneri serotype 2a strain 2457T.</title>
        <authorList>
            <person name="Wei J."/>
            <person name="Goldberg M.B."/>
            <person name="Burland V."/>
            <person name="Venkatesan M.M."/>
            <person name="Deng W."/>
            <person name="Fournier G."/>
            <person name="Mayhew G.F."/>
            <person name="Plunkett G. III"/>
            <person name="Rose D.J."/>
            <person name="Darling A."/>
            <person name="Mau B."/>
            <person name="Perna N.T."/>
            <person name="Payne S.M."/>
            <person name="Runyen-Janecky L.J."/>
            <person name="Zhou S."/>
            <person name="Schwartz D.C."/>
            <person name="Blattner F.R."/>
        </authorList>
    </citation>
    <scope>NUCLEOTIDE SEQUENCE [LARGE SCALE GENOMIC DNA]</scope>
    <source>
        <strain>ATCC 700930 / 2457T / Serotype 2a</strain>
    </source>
</reference>
<dbReference type="EC" id="7.6.2.7" evidence="1"/>
<dbReference type="EMBL" id="AE005674">
    <property type="protein sequence ID" value="AAN41913.1"/>
    <property type="molecule type" value="Genomic_DNA"/>
</dbReference>
<dbReference type="EMBL" id="AE014073">
    <property type="protein sequence ID" value="AAP15797.1"/>
    <property type="molecule type" value="Genomic_DNA"/>
</dbReference>
<dbReference type="RefSeq" id="NP_706206.1">
    <property type="nucleotide sequence ID" value="NC_004337.2"/>
</dbReference>
<dbReference type="RefSeq" id="WP_000939367.1">
    <property type="nucleotide sequence ID" value="NZ_WPGV01000152.1"/>
</dbReference>
<dbReference type="SMR" id="Q83MA0"/>
<dbReference type="STRING" id="198214.SF0252"/>
<dbReference type="PaxDb" id="198214-SF0252"/>
<dbReference type="GeneID" id="1024295"/>
<dbReference type="KEGG" id="sfl:SF0252"/>
<dbReference type="KEGG" id="sfx:S0273"/>
<dbReference type="PATRIC" id="fig|198214.7.peg.288"/>
<dbReference type="HOGENOM" id="CLU_000604_1_22_6"/>
<dbReference type="Proteomes" id="UP000001006">
    <property type="component" value="Chromosome"/>
</dbReference>
<dbReference type="Proteomes" id="UP000002673">
    <property type="component" value="Chromosome"/>
</dbReference>
<dbReference type="GO" id="GO:0005886">
    <property type="term" value="C:plasma membrane"/>
    <property type="evidence" value="ECO:0007669"/>
    <property type="project" value="UniProtKB-SubCell"/>
</dbReference>
<dbReference type="GO" id="GO:0015411">
    <property type="term" value="F:ABC-type taurine transporter transporter activity"/>
    <property type="evidence" value="ECO:0007669"/>
    <property type="project" value="UniProtKB-EC"/>
</dbReference>
<dbReference type="GO" id="GO:0005524">
    <property type="term" value="F:ATP binding"/>
    <property type="evidence" value="ECO:0007669"/>
    <property type="project" value="UniProtKB-KW"/>
</dbReference>
<dbReference type="GO" id="GO:0016887">
    <property type="term" value="F:ATP hydrolysis activity"/>
    <property type="evidence" value="ECO:0007669"/>
    <property type="project" value="InterPro"/>
</dbReference>
<dbReference type="CDD" id="cd03293">
    <property type="entry name" value="ABC_NrtD_SsuB_transporters"/>
    <property type="match status" value="1"/>
</dbReference>
<dbReference type="FunFam" id="3.40.50.300:FF:000653">
    <property type="entry name" value="Aliphatic sulfonates import ATP-binding protein SsuB"/>
    <property type="match status" value="1"/>
</dbReference>
<dbReference type="Gene3D" id="3.40.50.300">
    <property type="entry name" value="P-loop containing nucleotide triphosphate hydrolases"/>
    <property type="match status" value="1"/>
</dbReference>
<dbReference type="InterPro" id="IPR003593">
    <property type="entry name" value="AAA+_ATPase"/>
</dbReference>
<dbReference type="InterPro" id="IPR003439">
    <property type="entry name" value="ABC_transporter-like_ATP-bd"/>
</dbReference>
<dbReference type="InterPro" id="IPR050166">
    <property type="entry name" value="ABC_transporter_ATP-bind"/>
</dbReference>
<dbReference type="InterPro" id="IPR027417">
    <property type="entry name" value="P-loop_NTPase"/>
</dbReference>
<dbReference type="NCBIfam" id="NF008421">
    <property type="entry name" value="PRK11248.1"/>
    <property type="match status" value="1"/>
</dbReference>
<dbReference type="PANTHER" id="PTHR42788:SF18">
    <property type="entry name" value="TAURINE IMPORT ATP-BINDING PROTEIN TAUB"/>
    <property type="match status" value="1"/>
</dbReference>
<dbReference type="PANTHER" id="PTHR42788">
    <property type="entry name" value="TAURINE IMPORT ATP-BINDING PROTEIN-RELATED"/>
    <property type="match status" value="1"/>
</dbReference>
<dbReference type="Pfam" id="PF00005">
    <property type="entry name" value="ABC_tran"/>
    <property type="match status" value="1"/>
</dbReference>
<dbReference type="SMART" id="SM00382">
    <property type="entry name" value="AAA"/>
    <property type="match status" value="1"/>
</dbReference>
<dbReference type="SUPFAM" id="SSF52540">
    <property type="entry name" value="P-loop containing nucleoside triphosphate hydrolases"/>
    <property type="match status" value="1"/>
</dbReference>
<dbReference type="PROSITE" id="PS50893">
    <property type="entry name" value="ABC_TRANSPORTER_2"/>
    <property type="match status" value="1"/>
</dbReference>
<dbReference type="PROSITE" id="PS51250">
    <property type="entry name" value="TAUB"/>
    <property type="match status" value="1"/>
</dbReference>
<feature type="chain" id="PRO_0000093018" description="Taurine import ATP-binding protein TauB">
    <location>
        <begin position="1"/>
        <end position="255"/>
    </location>
</feature>
<feature type="domain" description="ABC transporter" evidence="1">
    <location>
        <begin position="2"/>
        <end position="229"/>
    </location>
</feature>
<feature type="binding site" evidence="1">
    <location>
        <begin position="34"/>
        <end position="41"/>
    </location>
    <ligand>
        <name>ATP</name>
        <dbReference type="ChEBI" id="CHEBI:30616"/>
    </ligand>
</feature>
<proteinExistence type="inferred from homology"/>
<sequence length="255" mass="28414">MLQISHLYADYGGKPALEDINLTLESGELLVVLGPSGCGKTTLLNLIAGFVPYQHGSIQLAGKRIEGPGAERGVVFQNEGLLPWRNVQDNVAFGLQLAGIEKMQRLEIAHQMLKKVGLEGAEKRYIWQLSDGQRQRVGIARALAANPQLLLLDEPFGALDAFTRDQMQTLLLKLWQETGKQVLLITHDIEEAVFMATELVLLSSGPGRVLERLRLNFARRFVAGESSRSIKSDPQFIAMREYVLSRVFEQREAFS</sequence>
<accession>Q83MA0</accession>
<accession>Q7C332</accession>
<protein>
    <recommendedName>
        <fullName evidence="1">Taurine import ATP-binding protein TauB</fullName>
        <ecNumber evidence="1">7.6.2.7</ecNumber>
    </recommendedName>
</protein>
<name>TAUB_SHIFL</name>
<organism>
    <name type="scientific">Shigella flexneri</name>
    <dbReference type="NCBI Taxonomy" id="623"/>
    <lineage>
        <taxon>Bacteria</taxon>
        <taxon>Pseudomonadati</taxon>
        <taxon>Pseudomonadota</taxon>
        <taxon>Gammaproteobacteria</taxon>
        <taxon>Enterobacterales</taxon>
        <taxon>Enterobacteriaceae</taxon>
        <taxon>Shigella</taxon>
    </lineage>
</organism>